<feature type="chain" id="PRO_1000070523" description="Nucleoid occlusion factor SlmA">
    <location>
        <begin position="1"/>
        <end position="198"/>
    </location>
</feature>
<feature type="domain" description="HTH tetR-type" evidence="1">
    <location>
        <begin position="9"/>
        <end position="70"/>
    </location>
</feature>
<feature type="DNA-binding region" description="H-T-H motif" evidence="1">
    <location>
        <begin position="33"/>
        <end position="52"/>
    </location>
</feature>
<feature type="coiled-coil region" evidence="1">
    <location>
        <begin position="117"/>
        <end position="144"/>
    </location>
</feature>
<dbReference type="EMBL" id="CP000826">
    <property type="protein sequence ID" value="ABV43938.1"/>
    <property type="molecule type" value="Genomic_DNA"/>
</dbReference>
<dbReference type="SMR" id="A8GLE8"/>
<dbReference type="STRING" id="399741.Spro_4845"/>
<dbReference type="KEGG" id="spe:Spro_4845"/>
<dbReference type="eggNOG" id="COG1309">
    <property type="taxonomic scope" value="Bacteria"/>
</dbReference>
<dbReference type="HOGENOM" id="CLU_069356_5_0_6"/>
<dbReference type="OrthoDB" id="9179041at2"/>
<dbReference type="GO" id="GO:0043590">
    <property type="term" value="C:bacterial nucleoid"/>
    <property type="evidence" value="ECO:0007669"/>
    <property type="project" value="UniProtKB-UniRule"/>
</dbReference>
<dbReference type="GO" id="GO:0005737">
    <property type="term" value="C:cytoplasm"/>
    <property type="evidence" value="ECO:0007669"/>
    <property type="project" value="UniProtKB-UniRule"/>
</dbReference>
<dbReference type="GO" id="GO:0003700">
    <property type="term" value="F:DNA-binding transcription factor activity"/>
    <property type="evidence" value="ECO:0007669"/>
    <property type="project" value="TreeGrafter"/>
</dbReference>
<dbReference type="GO" id="GO:0000976">
    <property type="term" value="F:transcription cis-regulatory region binding"/>
    <property type="evidence" value="ECO:0007669"/>
    <property type="project" value="TreeGrafter"/>
</dbReference>
<dbReference type="GO" id="GO:0051301">
    <property type="term" value="P:cell division"/>
    <property type="evidence" value="ECO:0007669"/>
    <property type="project" value="UniProtKB-KW"/>
</dbReference>
<dbReference type="GO" id="GO:0010974">
    <property type="term" value="P:negative regulation of division septum assembly"/>
    <property type="evidence" value="ECO:0007669"/>
    <property type="project" value="InterPro"/>
</dbReference>
<dbReference type="FunFam" id="1.10.357.10:FF:000002">
    <property type="entry name" value="Nucleoid occlusion factor SlmA"/>
    <property type="match status" value="1"/>
</dbReference>
<dbReference type="Gene3D" id="1.10.357.10">
    <property type="entry name" value="Tetracycline Repressor, domain 2"/>
    <property type="match status" value="1"/>
</dbReference>
<dbReference type="HAMAP" id="MF_01839">
    <property type="entry name" value="NO_factor_SlmA"/>
    <property type="match status" value="1"/>
</dbReference>
<dbReference type="InterPro" id="IPR023772">
    <property type="entry name" value="DNA-bd_HTH_TetR-type_CS"/>
</dbReference>
<dbReference type="InterPro" id="IPR009057">
    <property type="entry name" value="Homeodomain-like_sf"/>
</dbReference>
<dbReference type="InterPro" id="IPR050109">
    <property type="entry name" value="HTH-type_TetR-like_transc_reg"/>
</dbReference>
<dbReference type="InterPro" id="IPR001647">
    <property type="entry name" value="HTH_TetR"/>
</dbReference>
<dbReference type="InterPro" id="IPR023769">
    <property type="entry name" value="NO_SlmA"/>
</dbReference>
<dbReference type="InterPro" id="IPR054580">
    <property type="entry name" value="SlmA-like_C"/>
</dbReference>
<dbReference type="InterPro" id="IPR036271">
    <property type="entry name" value="Tet_transcr_reg_TetR-rel_C_sf"/>
</dbReference>
<dbReference type="NCBIfam" id="NF007015">
    <property type="entry name" value="PRK09480.1"/>
    <property type="match status" value="1"/>
</dbReference>
<dbReference type="PANTHER" id="PTHR30055">
    <property type="entry name" value="HTH-TYPE TRANSCRIPTIONAL REGULATOR RUTR"/>
    <property type="match status" value="1"/>
</dbReference>
<dbReference type="PANTHER" id="PTHR30055:SF183">
    <property type="entry name" value="NUCLEOID OCCLUSION FACTOR SLMA"/>
    <property type="match status" value="1"/>
</dbReference>
<dbReference type="Pfam" id="PF22276">
    <property type="entry name" value="SlmA-like_C"/>
    <property type="match status" value="1"/>
</dbReference>
<dbReference type="Pfam" id="PF00440">
    <property type="entry name" value="TetR_N"/>
    <property type="match status" value="1"/>
</dbReference>
<dbReference type="SUPFAM" id="SSF46689">
    <property type="entry name" value="Homeodomain-like"/>
    <property type="match status" value="1"/>
</dbReference>
<dbReference type="SUPFAM" id="SSF48498">
    <property type="entry name" value="Tetracyclin repressor-like, C-terminal domain"/>
    <property type="match status" value="1"/>
</dbReference>
<dbReference type="PROSITE" id="PS01081">
    <property type="entry name" value="HTH_TETR_1"/>
    <property type="match status" value="1"/>
</dbReference>
<dbReference type="PROSITE" id="PS50977">
    <property type="entry name" value="HTH_TETR_2"/>
    <property type="match status" value="1"/>
</dbReference>
<sequence>MAEKEKIKRNRREEILQALAQMLESSDGSQRITTAKLAANVGVSEAALYRHFPSKTRMFDSLIEFIEDSLITRINLILQDEKETFNRLRLILLLVLGFAERNPGLTRIMTGHALMFEQDRLQGRINQLFERIEAQLRQVLKERKLREGKGFIVDETLLASQLLAFCEGMLSRYVRSEFRYRPTQEFDGRWPLLAAQLQ</sequence>
<organism>
    <name type="scientific">Serratia proteamaculans (strain 568)</name>
    <dbReference type="NCBI Taxonomy" id="399741"/>
    <lineage>
        <taxon>Bacteria</taxon>
        <taxon>Pseudomonadati</taxon>
        <taxon>Pseudomonadota</taxon>
        <taxon>Gammaproteobacteria</taxon>
        <taxon>Enterobacterales</taxon>
        <taxon>Yersiniaceae</taxon>
        <taxon>Serratia</taxon>
    </lineage>
</organism>
<evidence type="ECO:0000255" key="1">
    <source>
        <dbReference type="HAMAP-Rule" id="MF_01839"/>
    </source>
</evidence>
<reference key="1">
    <citation type="submission" date="2007-09" db="EMBL/GenBank/DDBJ databases">
        <title>Complete sequence of chromosome of Serratia proteamaculans 568.</title>
        <authorList>
            <consortium name="US DOE Joint Genome Institute"/>
            <person name="Copeland A."/>
            <person name="Lucas S."/>
            <person name="Lapidus A."/>
            <person name="Barry K."/>
            <person name="Glavina del Rio T."/>
            <person name="Dalin E."/>
            <person name="Tice H."/>
            <person name="Pitluck S."/>
            <person name="Chain P."/>
            <person name="Malfatti S."/>
            <person name="Shin M."/>
            <person name="Vergez L."/>
            <person name="Schmutz J."/>
            <person name="Larimer F."/>
            <person name="Land M."/>
            <person name="Hauser L."/>
            <person name="Kyrpides N."/>
            <person name="Kim E."/>
            <person name="Taghavi S."/>
            <person name="Newman L."/>
            <person name="Vangronsveld J."/>
            <person name="van der Lelie D."/>
            <person name="Richardson P."/>
        </authorList>
    </citation>
    <scope>NUCLEOTIDE SEQUENCE [LARGE SCALE GENOMIC DNA]</scope>
    <source>
        <strain>568</strain>
    </source>
</reference>
<gene>
    <name evidence="1" type="primary">slmA</name>
    <name type="ordered locus">Spro_4845</name>
</gene>
<keyword id="KW-0131">Cell cycle</keyword>
<keyword id="KW-0132">Cell division</keyword>
<keyword id="KW-0175">Coiled coil</keyword>
<keyword id="KW-0963">Cytoplasm</keyword>
<keyword id="KW-0238">DNA-binding</keyword>
<name>SLMA_SERP5</name>
<proteinExistence type="inferred from homology"/>
<comment type="function">
    <text evidence="1">Required for nucleoid occlusion (NO) phenomenon, which prevents Z-ring formation and cell division over the nucleoid. Acts as a DNA-associated cell division inhibitor that binds simultaneously chromosomal DNA and FtsZ, and disrupts the assembly of FtsZ polymers. SlmA-DNA-binding sequences (SBS) are dispersed on non-Ter regions of the chromosome, preventing FtsZ polymerization at these regions.</text>
</comment>
<comment type="subunit">
    <text evidence="1">Homodimer. Interacts with FtsZ.</text>
</comment>
<comment type="subcellular location">
    <subcellularLocation>
        <location evidence="1">Cytoplasm</location>
        <location evidence="1">Nucleoid</location>
    </subcellularLocation>
</comment>
<comment type="similarity">
    <text evidence="1">Belongs to the nucleoid occlusion factor SlmA family.</text>
</comment>
<protein>
    <recommendedName>
        <fullName evidence="1">Nucleoid occlusion factor SlmA</fullName>
    </recommendedName>
</protein>
<accession>A8GLE8</accession>